<name>FTSK_STRCO</name>
<protein>
    <recommendedName>
        <fullName>DNA translocase FtsK</fullName>
    </recommendedName>
</protein>
<keyword id="KW-0067">ATP-binding</keyword>
<keyword id="KW-0131">Cell cycle</keyword>
<keyword id="KW-0132">Cell division</keyword>
<keyword id="KW-1003">Cell membrane</keyword>
<keyword id="KW-0159">Chromosome partition</keyword>
<keyword id="KW-0238">DNA-binding</keyword>
<keyword id="KW-0472">Membrane</keyword>
<keyword id="KW-0547">Nucleotide-binding</keyword>
<keyword id="KW-1185">Reference proteome</keyword>
<keyword id="KW-0812">Transmembrane</keyword>
<keyword id="KW-1133">Transmembrane helix</keyword>
<comment type="function">
    <text evidence="1">Essential cell division protein that coordinates cell division and chromosome segregation. The N-terminus is involved in assembly of the cell-division machinery. The C-terminus functions as a DNA motor that moves dsDNA in an ATP-dependent manner towards the dif recombination site, which is located within the replication terminus region. Required for activation of the Xer recombinase, allowing activation of chromosome unlinking by recombination (By similarity).</text>
</comment>
<comment type="subunit">
    <text evidence="1">Homohexamer. Forms a ring that surrounds DNA (By similarity).</text>
</comment>
<comment type="subcellular location">
    <subcellularLocation>
        <location evidence="1">Cell membrane</location>
        <topology evidence="1">Multi-pass membrane protein</topology>
    </subcellularLocation>
    <text evidence="1">Located at the septum.</text>
</comment>
<comment type="domain">
    <text evidence="1">Consists of an N-terminal domain, which is sufficient for the localization to the septal ring and is required for cell division, followed by a linker domain, and a C-terminal domain, which forms the translocation motor involved in chromosome segregation. The C-terminal domain can be further subdivided into alpha, beta and gamma subdomains. The alpha and beta subdomains form the DNA pump, and the gamma subdomain is a regulatory subdomain (By similarity).</text>
</comment>
<comment type="similarity">
    <text evidence="5">Belongs to the FtsK/SpoIIIE/SftA family.</text>
</comment>
<comment type="sequence caution" evidence="5">
    <conflict type="erroneous initiation">
        <sequence resource="EMBL-CDS" id="CAA19851"/>
    </conflict>
    <text>Extended N-terminus.</text>
</comment>
<reference key="1">
    <citation type="journal article" date="2002" name="Nature">
        <title>Complete genome sequence of the model actinomycete Streptomyces coelicolor A3(2).</title>
        <authorList>
            <person name="Bentley S.D."/>
            <person name="Chater K.F."/>
            <person name="Cerdeno-Tarraga A.-M."/>
            <person name="Challis G.L."/>
            <person name="Thomson N.R."/>
            <person name="James K.D."/>
            <person name="Harris D.E."/>
            <person name="Quail M.A."/>
            <person name="Kieser H."/>
            <person name="Harper D."/>
            <person name="Bateman A."/>
            <person name="Brown S."/>
            <person name="Chandra G."/>
            <person name="Chen C.W."/>
            <person name="Collins M."/>
            <person name="Cronin A."/>
            <person name="Fraser A."/>
            <person name="Goble A."/>
            <person name="Hidalgo J."/>
            <person name="Hornsby T."/>
            <person name="Howarth S."/>
            <person name="Huang C.-H."/>
            <person name="Kieser T."/>
            <person name="Larke L."/>
            <person name="Murphy L.D."/>
            <person name="Oliver K."/>
            <person name="O'Neil S."/>
            <person name="Rabbinowitsch E."/>
            <person name="Rajandream M.A."/>
            <person name="Rutherford K.M."/>
            <person name="Rutter S."/>
            <person name="Seeger K."/>
            <person name="Saunders D."/>
            <person name="Sharp S."/>
            <person name="Squares R."/>
            <person name="Squares S."/>
            <person name="Taylor K."/>
            <person name="Warren T."/>
            <person name="Wietzorrek A."/>
            <person name="Woodward J.R."/>
            <person name="Barrell B.G."/>
            <person name="Parkhill J."/>
            <person name="Hopwood D.A."/>
        </authorList>
    </citation>
    <scope>NUCLEOTIDE SEQUENCE [LARGE SCALE GENOMIC DNA]</scope>
    <source>
        <strain>ATCC BAA-471 / A3(2) / M145</strain>
    </source>
</reference>
<gene>
    <name type="primary">ftsK</name>
    <name type="ordered locus">SCO5750</name>
    <name type="ORF">SC7C7.05</name>
</gene>
<organism>
    <name type="scientific">Streptomyces coelicolor (strain ATCC BAA-471 / A3(2) / M145)</name>
    <dbReference type="NCBI Taxonomy" id="100226"/>
    <lineage>
        <taxon>Bacteria</taxon>
        <taxon>Bacillati</taxon>
        <taxon>Actinomycetota</taxon>
        <taxon>Actinomycetes</taxon>
        <taxon>Kitasatosporales</taxon>
        <taxon>Streptomycetaceae</taxon>
        <taxon>Streptomyces</taxon>
        <taxon>Streptomyces albidoflavus group</taxon>
    </lineage>
</organism>
<sequence>MASRPSAAKKQPAKKAAAPAKGPVKKAAAKKAPAKRAPAKKAAARKPAPQPAPNPTNGVYRLVRALWLGLAHGVGAVFRGIGQGAKNLDPAHRKDGVALLLLGVALIVAAGTWADLKGPVGDLVEILVTGAFGRLDLLVPILLGAIAVRLIRHPEKPEANGRIVIGLSALVIGVLGQVHIACGSPARSEGMQAIRDAGGLIGWGAATPLSYTMTDVLAVPLLVLLTVFGLLVVTATPVNAIPQRLRQLGVRLGVVHAPETDEFTNDDERYDEQWREALPARPRKRAQPAAAEPYDPDAAEQEALSRRRGRPRRSAVPQPEMNRPMDAVDVAAAAAAALDGAVLHGMPPSPLVADLTQGVSTGDRESTTPTPTPVPAARPQPGKLKKDATKAAGGEPAGGAVPDLTKTPLPKERDLPPRAEQLQLSGDITYSLPSLDSLTRGGPGKARSAANDAIVASLTTVFTEFKVDAAVTGFTRGPTVTRYEVELGPAVKVERITALTKNIAYAVASPDVRIISPIPGKSAVGIEIPNTDREMVNLGDVLRLAESAEDDDPMLVAFGKDVEGGYVMHSLAKMPHMLVAGATGSGKSSCINCLITSIMMRATPEDVRMILVDPKRVELTAYEGIPHLITPIITNPKRAAEALQWVVREMDLRYDDLAAYGYRHIDDFNRAVREGKVKPPEGSERELQPYPYLLVIVDELADLMMVAPRDVEDAIVRITQLARAAGIHLVLATQRPSVDVVTGLIKANVPSRLAFATSSLADSRVILDQPGAEKLIGKGDGLFLPMGANKPTRMQGAFVTEEEVATVVQHCKDQMAPVFREDVTVGTKQKKEIDEDIGDDLDLLCQAAELVVSTQFGSTSMLQRKLRVGFAKAGRLMDLMESRSIVGPSEGSKARDVLVKPDELDGVLAVIRGESEG</sequence>
<accession>O86810</accession>
<dbReference type="EMBL" id="AL939124">
    <property type="protein sequence ID" value="CAA19851.1"/>
    <property type="status" value="ALT_INIT"/>
    <property type="molecule type" value="Genomic_DNA"/>
</dbReference>
<dbReference type="PIR" id="T35683">
    <property type="entry name" value="T35683"/>
</dbReference>
<dbReference type="RefSeq" id="NP_629875.1">
    <property type="nucleotide sequence ID" value="NC_003888.3"/>
</dbReference>
<dbReference type="SMR" id="O86810"/>
<dbReference type="FunCoup" id="O86810">
    <property type="interactions" value="2"/>
</dbReference>
<dbReference type="STRING" id="100226.gene:17763410"/>
<dbReference type="TCDB" id="3.A.12.1.4">
    <property type="family name" value="the septal dna translocator (s-dna-t) family"/>
</dbReference>
<dbReference type="PaxDb" id="100226-SCO5750"/>
<dbReference type="KEGG" id="sco:SCO5750"/>
<dbReference type="PATRIC" id="fig|100226.15.peg.5839"/>
<dbReference type="eggNOG" id="COG1674">
    <property type="taxonomic scope" value="Bacteria"/>
</dbReference>
<dbReference type="HOGENOM" id="CLU_001981_2_2_11"/>
<dbReference type="InParanoid" id="O86810"/>
<dbReference type="OrthoDB" id="9807790at2"/>
<dbReference type="PhylomeDB" id="O86810"/>
<dbReference type="Proteomes" id="UP000001973">
    <property type="component" value="Chromosome"/>
</dbReference>
<dbReference type="GO" id="GO:0005886">
    <property type="term" value="C:plasma membrane"/>
    <property type="evidence" value="ECO:0007669"/>
    <property type="project" value="UniProtKB-SubCell"/>
</dbReference>
<dbReference type="GO" id="GO:0005524">
    <property type="term" value="F:ATP binding"/>
    <property type="evidence" value="ECO:0007669"/>
    <property type="project" value="UniProtKB-KW"/>
</dbReference>
<dbReference type="GO" id="GO:0016887">
    <property type="term" value="F:ATP hydrolysis activity"/>
    <property type="evidence" value="ECO:0007669"/>
    <property type="project" value="InterPro"/>
</dbReference>
<dbReference type="GO" id="GO:0003677">
    <property type="term" value="F:DNA binding"/>
    <property type="evidence" value="ECO:0007669"/>
    <property type="project" value="UniProtKB-KW"/>
</dbReference>
<dbReference type="GO" id="GO:0015616">
    <property type="term" value="F:DNA translocase activity"/>
    <property type="evidence" value="ECO:0000318"/>
    <property type="project" value="GO_Central"/>
</dbReference>
<dbReference type="GO" id="GO:0051301">
    <property type="term" value="P:cell division"/>
    <property type="evidence" value="ECO:0007669"/>
    <property type="project" value="UniProtKB-KW"/>
</dbReference>
<dbReference type="GO" id="GO:0007059">
    <property type="term" value="P:chromosome segregation"/>
    <property type="evidence" value="ECO:0007669"/>
    <property type="project" value="UniProtKB-KW"/>
</dbReference>
<dbReference type="CDD" id="cd01127">
    <property type="entry name" value="TrwB_TraG_TraD_VirD4"/>
    <property type="match status" value="1"/>
</dbReference>
<dbReference type="Gene3D" id="3.30.980.40">
    <property type="match status" value="1"/>
</dbReference>
<dbReference type="Gene3D" id="3.40.50.300">
    <property type="entry name" value="P-loop containing nucleotide triphosphate hydrolases"/>
    <property type="match status" value="1"/>
</dbReference>
<dbReference type="Gene3D" id="1.10.10.10">
    <property type="entry name" value="Winged helix-like DNA-binding domain superfamily/Winged helix DNA-binding domain"/>
    <property type="match status" value="1"/>
</dbReference>
<dbReference type="InterPro" id="IPR003593">
    <property type="entry name" value="AAA+_ATPase"/>
</dbReference>
<dbReference type="InterPro" id="IPR050206">
    <property type="entry name" value="FtsK/SpoIIIE/SftA"/>
</dbReference>
<dbReference type="InterPro" id="IPR041027">
    <property type="entry name" value="FtsK_alpha"/>
</dbReference>
<dbReference type="InterPro" id="IPR002543">
    <property type="entry name" value="FtsK_dom"/>
</dbReference>
<dbReference type="InterPro" id="IPR018541">
    <property type="entry name" value="Ftsk_gamma"/>
</dbReference>
<dbReference type="InterPro" id="IPR027417">
    <property type="entry name" value="P-loop_NTPase"/>
</dbReference>
<dbReference type="InterPro" id="IPR036388">
    <property type="entry name" value="WH-like_DNA-bd_sf"/>
</dbReference>
<dbReference type="InterPro" id="IPR036390">
    <property type="entry name" value="WH_DNA-bd_sf"/>
</dbReference>
<dbReference type="PANTHER" id="PTHR22683:SF41">
    <property type="entry name" value="DNA TRANSLOCASE FTSK"/>
    <property type="match status" value="1"/>
</dbReference>
<dbReference type="PANTHER" id="PTHR22683">
    <property type="entry name" value="SPORULATION PROTEIN RELATED"/>
    <property type="match status" value="1"/>
</dbReference>
<dbReference type="Pfam" id="PF17854">
    <property type="entry name" value="FtsK_alpha"/>
    <property type="match status" value="1"/>
</dbReference>
<dbReference type="Pfam" id="PF09397">
    <property type="entry name" value="FtsK_gamma"/>
    <property type="match status" value="1"/>
</dbReference>
<dbReference type="Pfam" id="PF01580">
    <property type="entry name" value="FtsK_SpoIIIE"/>
    <property type="match status" value="1"/>
</dbReference>
<dbReference type="SMART" id="SM00382">
    <property type="entry name" value="AAA"/>
    <property type="match status" value="1"/>
</dbReference>
<dbReference type="SMART" id="SM00843">
    <property type="entry name" value="Ftsk_gamma"/>
    <property type="match status" value="1"/>
</dbReference>
<dbReference type="SUPFAM" id="SSF52540">
    <property type="entry name" value="P-loop containing nucleoside triphosphate hydrolases"/>
    <property type="match status" value="1"/>
</dbReference>
<dbReference type="SUPFAM" id="SSF46785">
    <property type="entry name" value="Winged helix' DNA-binding domain"/>
    <property type="match status" value="1"/>
</dbReference>
<dbReference type="PROSITE" id="PS50901">
    <property type="entry name" value="FTSK"/>
    <property type="match status" value="1"/>
</dbReference>
<evidence type="ECO:0000250" key="1"/>
<evidence type="ECO:0000255" key="2"/>
<evidence type="ECO:0000255" key="3">
    <source>
        <dbReference type="PROSITE-ProRule" id="PRU00289"/>
    </source>
</evidence>
<evidence type="ECO:0000256" key="4">
    <source>
        <dbReference type="SAM" id="MobiDB-lite"/>
    </source>
</evidence>
<evidence type="ECO:0000305" key="5"/>
<proteinExistence type="inferred from homology"/>
<feature type="chain" id="PRO_0000098304" description="DNA translocase FtsK">
    <location>
        <begin position="1"/>
        <end position="917"/>
    </location>
</feature>
<feature type="transmembrane region" description="Helical" evidence="2">
    <location>
        <begin position="65"/>
        <end position="85"/>
    </location>
</feature>
<feature type="transmembrane region" description="Helical" evidence="2">
    <location>
        <begin position="96"/>
        <end position="116"/>
    </location>
</feature>
<feature type="transmembrane region" description="Helical" evidence="2">
    <location>
        <begin position="126"/>
        <end position="146"/>
    </location>
</feature>
<feature type="transmembrane region" description="Helical" evidence="2">
    <location>
        <begin position="163"/>
        <end position="183"/>
    </location>
</feature>
<feature type="transmembrane region" description="Helical" evidence="2">
    <location>
        <begin position="216"/>
        <end position="236"/>
    </location>
</feature>
<feature type="topological domain" description="Cytoplasmic" evidence="2">
    <location>
        <begin position="237"/>
        <end position="917"/>
    </location>
</feature>
<feature type="domain" description="FtsK" evidence="3">
    <location>
        <begin position="564"/>
        <end position="764"/>
    </location>
</feature>
<feature type="region of interest" description="Disordered" evidence="4">
    <location>
        <begin position="1"/>
        <end position="56"/>
    </location>
</feature>
<feature type="region of interest" description="Disordered" evidence="4">
    <location>
        <begin position="277"/>
        <end position="324"/>
    </location>
</feature>
<feature type="region of interest" description="Disordered" evidence="4">
    <location>
        <begin position="352"/>
        <end position="426"/>
    </location>
</feature>
<feature type="compositionally biased region" description="Low complexity" evidence="4">
    <location>
        <begin position="8"/>
        <end position="22"/>
    </location>
</feature>
<feature type="compositionally biased region" description="Basic residues" evidence="4">
    <location>
        <begin position="23"/>
        <end position="44"/>
    </location>
</feature>
<feature type="compositionally biased region" description="Low complexity" evidence="4">
    <location>
        <begin position="391"/>
        <end position="400"/>
    </location>
</feature>
<feature type="binding site" evidence="3">
    <location>
        <begin position="584"/>
        <end position="589"/>
    </location>
    <ligand>
        <name>ATP</name>
        <dbReference type="ChEBI" id="CHEBI:30616"/>
    </ligand>
</feature>